<evidence type="ECO:0000269" key="1">
    <source>
    </source>
</evidence>
<evidence type="ECO:0000269" key="2">
    <source>
    </source>
</evidence>
<evidence type="ECO:0000305" key="3"/>
<feature type="chain" id="PRO_0000142420" description="Adenine deaminase">
    <location>
        <begin position="1"/>
        <end position="588"/>
    </location>
</feature>
<protein>
    <recommendedName>
        <fullName>Adenine deaminase</fullName>
        <shortName>Adenase</shortName>
        <shortName>Adenine aminase</shortName>
        <ecNumber>3.5.4.2</ecNumber>
    </recommendedName>
</protein>
<organism>
    <name type="scientific">Escherichia coli (strain K12)</name>
    <dbReference type="NCBI Taxonomy" id="83333"/>
    <lineage>
        <taxon>Bacteria</taxon>
        <taxon>Pseudomonadati</taxon>
        <taxon>Pseudomonadota</taxon>
        <taxon>Gammaproteobacteria</taxon>
        <taxon>Enterobacterales</taxon>
        <taxon>Enterobacteriaceae</taxon>
        <taxon>Escherichia</taxon>
    </lineage>
</organism>
<accession>P31441</accession>
<accession>P78121</accession>
<accession>Q2M7X8</accession>
<reference key="1">
    <citation type="journal article" date="1993" name="Genomics">
        <title>DNA sequence and analysis of 136 kilobases of the Escherichia coli genome: organizational symmetry around the origin of replication.</title>
        <authorList>
            <person name="Burland V.D."/>
            <person name="Plunkett G. III"/>
            <person name="Daniels D.L."/>
            <person name="Blattner F.R."/>
        </authorList>
    </citation>
    <scope>NUCLEOTIDE SEQUENCE [LARGE SCALE GENOMIC DNA]</scope>
    <source>
        <strain>K12 / MG1655 / ATCC 47076</strain>
    </source>
</reference>
<reference key="2">
    <citation type="journal article" date="1997" name="Science">
        <title>The complete genome sequence of Escherichia coli K-12.</title>
        <authorList>
            <person name="Blattner F.R."/>
            <person name="Plunkett G. III"/>
            <person name="Bloch C.A."/>
            <person name="Perna N.T."/>
            <person name="Burland V."/>
            <person name="Riley M."/>
            <person name="Collado-Vides J."/>
            <person name="Glasner J.D."/>
            <person name="Rode C.K."/>
            <person name="Mayhew G.F."/>
            <person name="Gregor J."/>
            <person name="Davis N.W."/>
            <person name="Kirkpatrick H.A."/>
            <person name="Goeden M.A."/>
            <person name="Rose D.J."/>
            <person name="Mau B."/>
            <person name="Shao Y."/>
        </authorList>
    </citation>
    <scope>NUCLEOTIDE SEQUENCE [LARGE SCALE GENOMIC DNA]</scope>
    <source>
        <strain>K12 / MG1655 / ATCC 47076</strain>
    </source>
</reference>
<reference key="3">
    <citation type="journal article" date="2006" name="Mol. Syst. Biol.">
        <title>Highly accurate genome sequences of Escherichia coli K-12 strains MG1655 and W3110.</title>
        <authorList>
            <person name="Hayashi K."/>
            <person name="Morooka N."/>
            <person name="Yamamoto Y."/>
            <person name="Fujita K."/>
            <person name="Isono K."/>
            <person name="Choi S."/>
            <person name="Ohtsubo E."/>
            <person name="Baba T."/>
            <person name="Wanner B.L."/>
            <person name="Mori H."/>
            <person name="Horiuchi T."/>
        </authorList>
    </citation>
    <scope>NUCLEOTIDE SEQUENCE [LARGE SCALE GENOMIC DNA]</scope>
    <source>
        <strain>K12 / W3110 / ATCC 27325 / DSM 5911</strain>
    </source>
</reference>
<reference key="4">
    <citation type="journal article" date="2001" name="Biosci. Biotechnol. Biochem.">
        <title>Adenine deaminase activity of the yicP gene product of Escherichia coli.</title>
        <authorList>
            <person name="Matsui H."/>
            <person name="Shimaoka M."/>
            <person name="Kawasaki H."/>
            <person name="Takenaka Y."/>
            <person name="Kurahashi O."/>
        </authorList>
    </citation>
    <scope>CATALYTIC ACTIVITY</scope>
    <scope>COFACTOR</scope>
    <scope>SUBUNIT</scope>
    <source>
        <strain>K12 / W3110 / ATCC 27325 / DSM 5911</strain>
    </source>
</reference>
<reference key="5">
    <citation type="journal article" date="2002" name="J. Biol. Chem.">
        <title>The cryptic adenine deaminase gene of Escherichia coli. Silencing by the nucleoid-associated DNA-binding protein, H-NS, and activation by insertion elements.</title>
        <authorList>
            <person name="Petersen C."/>
            <person name="Moeller L.B."/>
            <person name="Valentin-Hansen P."/>
        </authorList>
    </citation>
    <scope>CATALYTIC ACTIVITY</scope>
    <scope>COFACTOR</scope>
    <scope>INDUCTION</scope>
    <source>
        <strain>K12</strain>
    </source>
</reference>
<sequence length="588" mass="63739">MNNSINHKFHHISRAEYQELLAVSRGDAVADYIIDNVSILDLINGGEISGPIVIKGRYIAGVGAEYTDAPALQRIDARGATAVPGFIDAHLHIESSMMTPVTFETATLPRGLTTVICDPHEIVNVMGEAGFAWFARCAEQARQNQYLQVSSCVPALEGCDVNGASFTLEQMLAWRDHPQVTGLAEMMDYPGVISGQNALLDKLDAFRHLTLDGHCPGLGGKELNAYITAGIENCHESYQLEEGRRKLQLGMSLMIREGSAARNLNALAPLINEFNSPQCMLCTDDRNPWEIAHEGHIDALIRRLIEQHNVPLHVAYRVASWSTARHFGLNHLGLLAPGKQADIVLLSDARKVTVQQVLVKGEPIDAQTLQAEESARLAQSAPPYGNTIARQPVSASDFALQFTPGKRYRVIDVIHNELITHSHSSVYSENGFDRDDVSFIAVLERYGQRLAPACGLLGGFGLNEGALAATVSHDSHNIVVIGRSAEEMALAVNQVIQDGGGLCVVRNGQVQSHLPLPIAGLMSTDTAQSLAEQIDALKAAARECGPLPDEPFIQMAFLSLPVIPALKLTSQGLFDGEKFAFTTLEVTE</sequence>
<keyword id="KW-0378">Hydrolase</keyword>
<keyword id="KW-0464">Manganese</keyword>
<keyword id="KW-1185">Reference proteome</keyword>
<gene>
    <name type="primary">ade</name>
    <name type="synonym">yicP</name>
    <name type="ordered locus">b3665</name>
    <name type="ordered locus">JW3640</name>
</gene>
<name>ADEC_ECOLI</name>
<comment type="catalytic activity">
    <reaction evidence="1 2">
        <text>adenine + H2O + H(+) = hypoxanthine + NH4(+)</text>
        <dbReference type="Rhea" id="RHEA:23688"/>
        <dbReference type="ChEBI" id="CHEBI:15377"/>
        <dbReference type="ChEBI" id="CHEBI:15378"/>
        <dbReference type="ChEBI" id="CHEBI:16708"/>
        <dbReference type="ChEBI" id="CHEBI:17368"/>
        <dbReference type="ChEBI" id="CHEBI:28938"/>
        <dbReference type="EC" id="3.5.4.2"/>
    </reaction>
</comment>
<comment type="cofactor">
    <cofactor evidence="1 2">
        <name>Mn(2+)</name>
        <dbReference type="ChEBI" id="CHEBI:29035"/>
    </cofactor>
</comment>
<comment type="biophysicochemical properties">
    <phDependence>
        <text>Optimum pH is 6.5-7.0.</text>
    </phDependence>
    <temperatureDependence>
        <text>Optimum temperature is 60 degrees Celsius.</text>
    </temperatureDependence>
</comment>
<comment type="subunit">
    <text evidence="1">Homodimer.</text>
</comment>
<comment type="induction">
    <text evidence="2">Repressed by H-NS. Activated by insertion of a variety of IS elements into a region extending from -145 to +13 relative to the transcription start site. IS elements essentially eliminate the H-NS-mediated silencing, but also stimulate ade expression 2-3 fold independently of the H-NS protein.</text>
</comment>
<comment type="miscellaneous">
    <text>Ade is a cryptic gene in wild-type strains. The physiological conditions that lead to its activation are unknown.</text>
</comment>
<comment type="similarity">
    <text evidence="3">Belongs to the metallo-dependent hydrolases superfamily. Adenine deaminase family.</text>
</comment>
<proteinExistence type="evidence at protein level"/>
<dbReference type="EC" id="3.5.4.2"/>
<dbReference type="EMBL" id="L10328">
    <property type="protein sequence ID" value="AAA62017.1"/>
    <property type="molecule type" value="Genomic_DNA"/>
</dbReference>
<dbReference type="EMBL" id="U00096">
    <property type="protein sequence ID" value="AAC76688.1"/>
    <property type="molecule type" value="Genomic_DNA"/>
</dbReference>
<dbReference type="EMBL" id="AP009048">
    <property type="protein sequence ID" value="BAE77628.1"/>
    <property type="molecule type" value="Genomic_DNA"/>
</dbReference>
<dbReference type="PIR" id="B65168">
    <property type="entry name" value="B65168"/>
</dbReference>
<dbReference type="RefSeq" id="NP_418121.1">
    <property type="nucleotide sequence ID" value="NC_000913.3"/>
</dbReference>
<dbReference type="SMR" id="P31441"/>
<dbReference type="BioGRID" id="4262580">
    <property type="interactions" value="24"/>
</dbReference>
<dbReference type="DIP" id="DIP-12439N"/>
<dbReference type="FunCoup" id="P31441">
    <property type="interactions" value="228"/>
</dbReference>
<dbReference type="IntAct" id="P31441">
    <property type="interactions" value="11"/>
</dbReference>
<dbReference type="STRING" id="511145.b3665"/>
<dbReference type="jPOST" id="P31441"/>
<dbReference type="PaxDb" id="511145-b3665"/>
<dbReference type="EnsemblBacteria" id="AAC76688">
    <property type="protein sequence ID" value="AAC76688"/>
    <property type="gene ID" value="b3665"/>
</dbReference>
<dbReference type="GeneID" id="948210"/>
<dbReference type="KEGG" id="ecj:JW3640"/>
<dbReference type="KEGG" id="eco:b3665"/>
<dbReference type="KEGG" id="ecoc:C3026_19865"/>
<dbReference type="PATRIC" id="fig|1411691.4.peg.3040"/>
<dbReference type="EchoBASE" id="EB1643"/>
<dbReference type="eggNOG" id="COG1001">
    <property type="taxonomic scope" value="Bacteria"/>
</dbReference>
<dbReference type="HOGENOM" id="CLU_027935_0_0_6"/>
<dbReference type="InParanoid" id="P31441"/>
<dbReference type="OMA" id="TDHECFT"/>
<dbReference type="OrthoDB" id="9766983at2"/>
<dbReference type="PhylomeDB" id="P31441"/>
<dbReference type="BioCyc" id="EcoCyc:EG11692-MONOMER"/>
<dbReference type="BioCyc" id="MetaCyc:EG11692-MONOMER"/>
<dbReference type="PRO" id="PR:P31441"/>
<dbReference type="Proteomes" id="UP000000625">
    <property type="component" value="Chromosome"/>
</dbReference>
<dbReference type="GO" id="GO:0000034">
    <property type="term" value="F:adenine deaminase activity"/>
    <property type="evidence" value="ECO:0000314"/>
    <property type="project" value="EcoCyc"/>
</dbReference>
<dbReference type="GO" id="GO:0004096">
    <property type="term" value="F:catalase activity"/>
    <property type="evidence" value="ECO:0000314"/>
    <property type="project" value="EcoCyc"/>
</dbReference>
<dbReference type="GO" id="GO:0008198">
    <property type="term" value="F:ferrous iron binding"/>
    <property type="evidence" value="ECO:0000314"/>
    <property type="project" value="EcoCyc"/>
</dbReference>
<dbReference type="GO" id="GO:0030145">
    <property type="term" value="F:manganese ion binding"/>
    <property type="evidence" value="ECO:0000314"/>
    <property type="project" value="EcoCyc"/>
</dbReference>
<dbReference type="GO" id="GO:0042803">
    <property type="term" value="F:protein homodimerization activity"/>
    <property type="evidence" value="ECO:0000314"/>
    <property type="project" value="EcoCyc"/>
</dbReference>
<dbReference type="GO" id="GO:0006146">
    <property type="term" value="P:adenine catabolic process"/>
    <property type="evidence" value="ECO:0007669"/>
    <property type="project" value="InterPro"/>
</dbReference>
<dbReference type="CDD" id="cd01295">
    <property type="entry name" value="AdeC"/>
    <property type="match status" value="1"/>
</dbReference>
<dbReference type="FunFam" id="3.20.20.140:FF:000016">
    <property type="entry name" value="Adenine deaminase"/>
    <property type="match status" value="1"/>
</dbReference>
<dbReference type="Gene3D" id="3.20.20.140">
    <property type="entry name" value="Metal-dependent hydrolases"/>
    <property type="match status" value="1"/>
</dbReference>
<dbReference type="Gene3D" id="2.30.40.10">
    <property type="entry name" value="Urease, subunit C, domain 1"/>
    <property type="match status" value="1"/>
</dbReference>
<dbReference type="HAMAP" id="MF_01518">
    <property type="entry name" value="Adenine_deamin"/>
    <property type="match status" value="1"/>
</dbReference>
<dbReference type="InterPro" id="IPR006679">
    <property type="entry name" value="Adenine_deam"/>
</dbReference>
<dbReference type="InterPro" id="IPR026912">
    <property type="entry name" value="Adenine_deam_C"/>
</dbReference>
<dbReference type="InterPro" id="IPR006680">
    <property type="entry name" value="Amidohydro-rel"/>
</dbReference>
<dbReference type="InterPro" id="IPR011059">
    <property type="entry name" value="Metal-dep_hydrolase_composite"/>
</dbReference>
<dbReference type="InterPro" id="IPR032466">
    <property type="entry name" value="Metal_Hydrolase"/>
</dbReference>
<dbReference type="NCBIfam" id="TIGR01178">
    <property type="entry name" value="ade"/>
    <property type="match status" value="1"/>
</dbReference>
<dbReference type="NCBIfam" id="NF007457">
    <property type="entry name" value="PRK10027.1"/>
    <property type="match status" value="1"/>
</dbReference>
<dbReference type="PANTHER" id="PTHR11113:SF2">
    <property type="entry name" value="ADENINE DEAMINASE"/>
    <property type="match status" value="1"/>
</dbReference>
<dbReference type="PANTHER" id="PTHR11113">
    <property type="entry name" value="N-ACETYLGLUCOSAMINE-6-PHOSPHATE DEACETYLASE"/>
    <property type="match status" value="1"/>
</dbReference>
<dbReference type="Pfam" id="PF13382">
    <property type="entry name" value="Adenine_deam_C"/>
    <property type="match status" value="1"/>
</dbReference>
<dbReference type="Pfam" id="PF01979">
    <property type="entry name" value="Amidohydro_1"/>
    <property type="match status" value="1"/>
</dbReference>
<dbReference type="SUPFAM" id="SSF51338">
    <property type="entry name" value="Composite domain of metallo-dependent hydrolases"/>
    <property type="match status" value="1"/>
</dbReference>
<dbReference type="SUPFAM" id="SSF51556">
    <property type="entry name" value="Metallo-dependent hydrolases"/>
    <property type="match status" value="1"/>
</dbReference>